<name>SYT10_RAT</name>
<keyword id="KW-0106">Calcium</keyword>
<keyword id="KW-0968">Cytoplasmic vesicle</keyword>
<keyword id="KW-1015">Disulfide bond</keyword>
<keyword id="KW-0268">Exocytosis</keyword>
<keyword id="KW-0472">Membrane</keyword>
<keyword id="KW-0479">Metal-binding</keyword>
<keyword id="KW-0597">Phosphoprotein</keyword>
<keyword id="KW-1185">Reference proteome</keyword>
<keyword id="KW-0677">Repeat</keyword>
<keyword id="KW-0812">Transmembrane</keyword>
<keyword id="KW-1133">Transmembrane helix</keyword>
<sequence length="523" mass="59011">MSFRKEDGVSSLCQKALHIITELCFAGQVEWDKCSGIFPADRSGQGGGGTDISVSLLAVVVSFCGLALLVVSLFVFWKLCWPCWKSKLVAPNVSTLPQSISSAPTEVFETEEKKEVEENEKPAPKAIEPAIKISHTSPDIPAEVQTALKEHLIKHARVQRQTTDPTSSSRHNSFRRHLPRQMNVSSVDFSMGTEPVLQRGETRTSIGRIKPELYKQKSVDSEGNRKDDVKTCGKLNFALQYDYENELLVVKIIKALDLPAKDFTGTSDPYVKIYLLPDRKKKFQTRVHRKTLNPLFDELFQFPVVYDQLSNRKLHFSIYDFDRFSRHDMIGEVILDNLFEVSDLSREATVWKDIHCATTESIDLGEIMFSLCYLPTAGRMTLTVIKCRNLKAMDITGSSDPYVKVSLMCEGRRLKKRKTTTKKNTLNPVYNEAIIFDIPPENVDQVSLCIAVMDYDRVGHNEVIGVCRTGLDAEGLGRDHWNEMLAYHRKPITHWHPLLELPGRATSFDSQGSCSSPRPPSTP</sequence>
<proteinExistence type="evidence at transcript level"/>
<protein>
    <recommendedName>
        <fullName>Synaptotagmin-10</fullName>
    </recommendedName>
    <alternativeName>
        <fullName>Synaptotagmin X</fullName>
        <shortName>SytX</shortName>
    </alternativeName>
</protein>
<reference key="1">
    <citation type="submission" date="2001-05" db="EMBL/GenBank/DDBJ databases">
        <authorList>
            <person name="Shin O.-H."/>
            <person name="Suedhof T.C."/>
        </authorList>
    </citation>
    <scope>NUCLEOTIDE SEQUENCE [MRNA]</scope>
</reference>
<reference key="2">
    <citation type="journal article" date="1997" name="Proc. Natl. Acad. Sci. U.S.A.">
        <title>A novel seizure-induced synaptotagmin gene identified by differential display.</title>
        <authorList>
            <person name="Babity J.M."/>
            <person name="Armstrong J.N."/>
            <person name="Plumier J.C."/>
            <person name="Currie R.W."/>
            <person name="Robertson H.A."/>
        </authorList>
    </citation>
    <scope>NUCLEOTIDE SEQUENCE [MRNA] OF 1-498</scope>
    <source>
        <strain>Sprague-Dawley</strain>
    </source>
</reference>
<reference key="3">
    <citation type="journal article" date="2002" name="EMBO J.">
        <title>Synaptotagmins form a hierarchy of exocytotic Ca(2+) sensors with distinct Ca(2+) affinities.</title>
        <authorList>
            <person name="Sugita S."/>
            <person name="Shin O.H."/>
            <person name="Han W."/>
            <person name="Lao Y."/>
            <person name="Suedhof T.C."/>
        </authorList>
    </citation>
    <scope>COFACTOR</scope>
    <scope>DOMAIN</scope>
</reference>
<reference key="4">
    <citation type="journal article" date="2008" name="J. Biol. Chem.">
        <title>Analysis of the synaptotagmin family during reconstituted membrane fusion. Uncovering a class of inhibitory isoforms.</title>
        <authorList>
            <person name="Bhalla A."/>
            <person name="Chicka M.C."/>
            <person name="Chapman E.R."/>
        </authorList>
    </citation>
    <scope>FUNCTION</scope>
</reference>
<feature type="chain" id="PRO_0000183968" description="Synaptotagmin-10">
    <location>
        <begin position="1"/>
        <end position="523"/>
    </location>
</feature>
<feature type="topological domain" description="Vesicular" evidence="4">
    <location>
        <begin position="1"/>
        <end position="55"/>
    </location>
</feature>
<feature type="transmembrane region" description="Helical" evidence="4">
    <location>
        <begin position="56"/>
        <end position="76"/>
    </location>
</feature>
<feature type="topological domain" description="Cytoplasmic" evidence="4">
    <location>
        <begin position="77"/>
        <end position="523"/>
    </location>
</feature>
<feature type="domain" description="C2 1" evidence="5">
    <location>
        <begin position="231"/>
        <end position="352"/>
    </location>
</feature>
<feature type="domain" description="C2 2" evidence="5">
    <location>
        <begin position="363"/>
        <end position="496"/>
    </location>
</feature>
<feature type="region of interest" description="Cysteine motif" evidence="1">
    <location>
        <begin position="13"/>
        <end position="35"/>
    </location>
</feature>
<feature type="binding site" evidence="5">
    <location>
        <position position="262"/>
    </location>
    <ligand>
        <name>Ca(2+)</name>
        <dbReference type="ChEBI" id="CHEBI:29108"/>
        <label>1</label>
    </ligand>
</feature>
<feature type="binding site" evidence="5">
    <location>
        <position position="262"/>
    </location>
    <ligand>
        <name>Ca(2+)</name>
        <dbReference type="ChEBI" id="CHEBI:29108"/>
        <label>2</label>
    </ligand>
</feature>
<feature type="binding site" evidence="5">
    <location>
        <position position="268"/>
    </location>
    <ligand>
        <name>Ca(2+)</name>
        <dbReference type="ChEBI" id="CHEBI:29108"/>
        <label>1</label>
    </ligand>
</feature>
<feature type="binding site" evidence="5">
    <location>
        <position position="320"/>
    </location>
    <ligand>
        <name>Ca(2+)</name>
        <dbReference type="ChEBI" id="CHEBI:29108"/>
        <label>1</label>
    </ligand>
</feature>
<feature type="binding site" evidence="5">
    <location>
        <position position="320"/>
    </location>
    <ligand>
        <name>Ca(2+)</name>
        <dbReference type="ChEBI" id="CHEBI:29108"/>
        <label>2</label>
    </ligand>
</feature>
<feature type="binding site" evidence="5">
    <location>
        <position position="321"/>
    </location>
    <ligand>
        <name>Ca(2+)</name>
        <dbReference type="ChEBI" id="CHEBI:29108"/>
        <label>1</label>
    </ligand>
</feature>
<feature type="binding site" evidence="5">
    <location>
        <position position="322"/>
    </location>
    <ligand>
        <name>Ca(2+)</name>
        <dbReference type="ChEBI" id="CHEBI:29108"/>
        <label>1</label>
    </ligand>
</feature>
<feature type="binding site" evidence="5">
    <location>
        <position position="322"/>
    </location>
    <ligand>
        <name>Ca(2+)</name>
        <dbReference type="ChEBI" id="CHEBI:29108"/>
        <label>2</label>
    </ligand>
</feature>
<feature type="binding site" evidence="5">
    <location>
        <position position="322"/>
    </location>
    <ligand>
        <name>Ca(2+)</name>
        <dbReference type="ChEBI" id="CHEBI:29108"/>
        <label>3</label>
    </ligand>
</feature>
<feature type="binding site" evidence="5">
    <location>
        <position position="325"/>
    </location>
    <ligand>
        <name>Ca(2+)</name>
        <dbReference type="ChEBI" id="CHEBI:29108"/>
        <label>3</label>
    </ligand>
</feature>
<feature type="binding site" evidence="5">
    <location>
        <position position="328"/>
    </location>
    <ligand>
        <name>Ca(2+)</name>
        <dbReference type="ChEBI" id="CHEBI:29108"/>
        <label>2</label>
    </ligand>
</feature>
<feature type="binding site" evidence="5">
    <location>
        <position position="328"/>
    </location>
    <ligand>
        <name>Ca(2+)</name>
        <dbReference type="ChEBI" id="CHEBI:29108"/>
        <label>3</label>
    </ligand>
</feature>
<feature type="binding site" evidence="5">
    <location>
        <position position="394"/>
    </location>
    <ligand>
        <name>Ca(2+)</name>
        <dbReference type="ChEBI" id="CHEBI:29108"/>
        <label>4</label>
    </ligand>
</feature>
<feature type="binding site" evidence="5">
    <location>
        <position position="400"/>
    </location>
    <ligand>
        <name>Ca(2+)</name>
        <dbReference type="ChEBI" id="CHEBI:29108"/>
        <label>4</label>
    </ligand>
</feature>
<feature type="binding site" evidence="5">
    <location>
        <position position="454"/>
    </location>
    <ligand>
        <name>Ca(2+)</name>
        <dbReference type="ChEBI" id="CHEBI:29108"/>
        <label>4</label>
    </ligand>
</feature>
<feature type="binding site" evidence="5">
    <location>
        <position position="456"/>
    </location>
    <ligand>
        <name>Ca(2+)</name>
        <dbReference type="ChEBI" id="CHEBI:29108"/>
        <label>4</label>
    </ligand>
</feature>
<feature type="modified residue" description="Phosphothreonine" evidence="3">
    <location>
        <position position="136"/>
    </location>
</feature>
<feature type="sequence conflict" description="In Ref. 2; AAB51686." evidence="8" ref="2">
    <original>F</original>
    <variation>S</variation>
    <location>
        <position position="263"/>
    </location>
</feature>
<feature type="sequence conflict" description="In Ref. 2; AAB51686." evidence="8" ref="2">
    <original>I</original>
    <variation>M</variation>
    <location>
        <position position="362"/>
    </location>
</feature>
<accession>O08625</accession>
<accession>Q925B8</accession>
<comment type="function">
    <text evidence="3 7">Ca(2+) sensor specifically required for the Ca(2+)-dependent exocytosis of secretory vesicles containing IGF1 in neurons of the olfactory bulb. Exocytosis of IGF1 is required for sensory perception of smell. Not involved in Ca(2+)-dependent synaptic vesicle exocytosis (By similarity). Acts through Ca(2+) and phospholipid binding to the C2 domain: Ca(2+) induces binding of the C2-domains to phospholipid membranes and to assembled SNARE-complexes; both actions contribute to triggering exocytosis (PubMed:18508778).</text>
</comment>
<comment type="cofactor">
    <cofactor evidence="5 6">
        <name>Ca(2+)</name>
        <dbReference type="ChEBI" id="CHEBI:29108"/>
    </cofactor>
    <text evidence="2">Binds 3 Ca(2+) ions per subunit. The ions are bound to the C2 domains.</text>
</comment>
<comment type="subunit">
    <text evidence="3">Homodimer; disulfide-linked via the cysteine motif. Can also form heterodimers with SYT3, SYT6, SYT7 and SYT9.</text>
</comment>
<comment type="subcellular location">
    <subcellularLocation>
        <location evidence="3">Cytoplasmic vesicle</location>
        <location evidence="3">Secretory vesicle membrane</location>
        <topology evidence="4">Single-pass membrane protein</topology>
    </subcellularLocation>
    <text evidence="3">Localizes to neuronal vesicles containing IGF1 that are not enriched at synapses. Does not colocalize with synaptic vesicles or with the Golgi apparatus.</text>
</comment>
<comment type="domain">
    <text evidence="1">The cysteine motif mediates homo- or heterodimer formation via formation of disulfide bonds.</text>
</comment>
<comment type="domain">
    <text evidence="6">The first C2 domain mediates Ca(2+)-dependent phospholipid binding.</text>
</comment>
<comment type="similarity">
    <text evidence="8">Belongs to the synaptotagmin family.</text>
</comment>
<gene>
    <name type="primary">Syt10</name>
</gene>
<evidence type="ECO:0000250" key="1">
    <source>
        <dbReference type="UniProtKB" id="O35681"/>
    </source>
</evidence>
<evidence type="ECO:0000250" key="2">
    <source>
        <dbReference type="UniProtKB" id="P40748"/>
    </source>
</evidence>
<evidence type="ECO:0000250" key="3">
    <source>
        <dbReference type="UniProtKB" id="Q9R0N4"/>
    </source>
</evidence>
<evidence type="ECO:0000255" key="4"/>
<evidence type="ECO:0000255" key="5">
    <source>
        <dbReference type="PROSITE-ProRule" id="PRU00041"/>
    </source>
</evidence>
<evidence type="ECO:0000269" key="6">
    <source>
    </source>
</evidence>
<evidence type="ECO:0000269" key="7">
    <source>
    </source>
</evidence>
<evidence type="ECO:0000305" key="8"/>
<organism>
    <name type="scientific">Rattus norvegicus</name>
    <name type="common">Rat</name>
    <dbReference type="NCBI Taxonomy" id="10116"/>
    <lineage>
        <taxon>Eukaryota</taxon>
        <taxon>Metazoa</taxon>
        <taxon>Chordata</taxon>
        <taxon>Craniata</taxon>
        <taxon>Vertebrata</taxon>
        <taxon>Euteleostomi</taxon>
        <taxon>Mammalia</taxon>
        <taxon>Eutheria</taxon>
        <taxon>Euarchontoglires</taxon>
        <taxon>Glires</taxon>
        <taxon>Rodentia</taxon>
        <taxon>Myomorpha</taxon>
        <taxon>Muroidea</taxon>
        <taxon>Muridae</taxon>
        <taxon>Murinae</taxon>
        <taxon>Rattus</taxon>
    </lineage>
</organism>
<dbReference type="EMBL" id="AF375463">
    <property type="protein sequence ID" value="AAK56958.1"/>
    <property type="molecule type" value="mRNA"/>
</dbReference>
<dbReference type="EMBL" id="U85513">
    <property type="protein sequence ID" value="AAB51686.1"/>
    <property type="molecule type" value="mRNA"/>
</dbReference>
<dbReference type="PIR" id="PC6300">
    <property type="entry name" value="PC6300"/>
</dbReference>
<dbReference type="RefSeq" id="NP_113854.1">
    <property type="nucleotide sequence ID" value="NM_031666.3"/>
</dbReference>
<dbReference type="SMR" id="O08625"/>
<dbReference type="FunCoup" id="O08625">
    <property type="interactions" value="93"/>
</dbReference>
<dbReference type="STRING" id="10116.ENSRNOP00000019406"/>
<dbReference type="PhosphoSitePlus" id="O08625"/>
<dbReference type="PaxDb" id="10116-ENSRNOP00000019406"/>
<dbReference type="ABCD" id="O08625">
    <property type="antibodies" value="1 sequenced antibody"/>
</dbReference>
<dbReference type="Ensembl" id="ENSRNOT00000098923.1">
    <property type="protein sequence ID" value="ENSRNOP00000091005.1"/>
    <property type="gene ID" value="ENSRNOG00000014296.4"/>
</dbReference>
<dbReference type="GeneID" id="60567"/>
<dbReference type="KEGG" id="rno:60567"/>
<dbReference type="AGR" id="RGD:62041"/>
<dbReference type="CTD" id="341359"/>
<dbReference type="RGD" id="62041">
    <property type="gene designation" value="Syt10"/>
</dbReference>
<dbReference type="eggNOG" id="KOG1028">
    <property type="taxonomic scope" value="Eukaryota"/>
</dbReference>
<dbReference type="GeneTree" id="ENSGT00940000158899"/>
<dbReference type="HOGENOM" id="CLU_023008_8_3_1"/>
<dbReference type="InParanoid" id="O08625"/>
<dbReference type="OMA" id="IWKDIHC"/>
<dbReference type="OrthoDB" id="67700at2759"/>
<dbReference type="PhylomeDB" id="O08625"/>
<dbReference type="TreeFam" id="TF315600"/>
<dbReference type="PRO" id="PR:O08625"/>
<dbReference type="Proteomes" id="UP000002494">
    <property type="component" value="Chromosome 7"/>
</dbReference>
<dbReference type="Bgee" id="ENSRNOG00000014296">
    <property type="expression patterns" value="Expressed in brain and 5 other cell types or tissues"/>
</dbReference>
<dbReference type="GO" id="GO:0070382">
    <property type="term" value="C:exocytic vesicle"/>
    <property type="evidence" value="ECO:0000250"/>
    <property type="project" value="UniProtKB"/>
</dbReference>
<dbReference type="GO" id="GO:0098978">
    <property type="term" value="C:glutamatergic synapse"/>
    <property type="evidence" value="ECO:0000266"/>
    <property type="project" value="RGD"/>
</dbReference>
<dbReference type="GO" id="GO:0005886">
    <property type="term" value="C:plasma membrane"/>
    <property type="evidence" value="ECO:0000318"/>
    <property type="project" value="GO_Central"/>
</dbReference>
<dbReference type="GO" id="GO:0098793">
    <property type="term" value="C:presynapse"/>
    <property type="evidence" value="ECO:0000266"/>
    <property type="project" value="RGD"/>
</dbReference>
<dbReference type="GO" id="GO:0030672">
    <property type="term" value="C:synaptic vesicle membrane"/>
    <property type="evidence" value="ECO:0000304"/>
    <property type="project" value="Reactome"/>
</dbReference>
<dbReference type="GO" id="GO:0005509">
    <property type="term" value="F:calcium ion binding"/>
    <property type="evidence" value="ECO:0000250"/>
    <property type="project" value="UniProtKB"/>
</dbReference>
<dbReference type="GO" id="GO:0061891">
    <property type="term" value="F:calcium ion sensor activity"/>
    <property type="evidence" value="ECO:0000318"/>
    <property type="project" value="GO_Central"/>
</dbReference>
<dbReference type="GO" id="GO:0005544">
    <property type="term" value="F:calcium-dependent phospholipid binding"/>
    <property type="evidence" value="ECO:0000318"/>
    <property type="project" value="GO_Central"/>
</dbReference>
<dbReference type="GO" id="GO:0042802">
    <property type="term" value="F:identical protein binding"/>
    <property type="evidence" value="ECO:0000266"/>
    <property type="project" value="RGD"/>
</dbReference>
<dbReference type="GO" id="GO:0005546">
    <property type="term" value="F:phosphatidylinositol-4,5-bisphosphate binding"/>
    <property type="evidence" value="ECO:0000266"/>
    <property type="project" value="RGD"/>
</dbReference>
<dbReference type="GO" id="GO:0001786">
    <property type="term" value="F:phosphatidylserine binding"/>
    <property type="evidence" value="ECO:0000266"/>
    <property type="project" value="RGD"/>
</dbReference>
<dbReference type="GO" id="GO:0046982">
    <property type="term" value="F:protein heterodimerization activity"/>
    <property type="evidence" value="ECO:0000266"/>
    <property type="project" value="RGD"/>
</dbReference>
<dbReference type="GO" id="GO:0042803">
    <property type="term" value="F:protein homodimerization activity"/>
    <property type="evidence" value="ECO:0000266"/>
    <property type="project" value="RGD"/>
</dbReference>
<dbReference type="GO" id="GO:0000149">
    <property type="term" value="F:SNARE binding"/>
    <property type="evidence" value="ECO:0000266"/>
    <property type="project" value="RGD"/>
</dbReference>
<dbReference type="GO" id="GO:0007268">
    <property type="term" value="P:chemical synaptic transmission"/>
    <property type="evidence" value="ECO:0000250"/>
    <property type="project" value="UniProtKB"/>
</dbReference>
<dbReference type="GO" id="GO:0045956">
    <property type="term" value="P:positive regulation of calcium ion-dependent exocytosis"/>
    <property type="evidence" value="ECO:0000250"/>
    <property type="project" value="UniProtKB"/>
</dbReference>
<dbReference type="GO" id="GO:0099525">
    <property type="term" value="P:presynaptic dense core vesicle exocytosis"/>
    <property type="evidence" value="ECO:0000266"/>
    <property type="project" value="RGD"/>
</dbReference>
<dbReference type="GO" id="GO:0017158">
    <property type="term" value="P:regulation of calcium ion-dependent exocytosis"/>
    <property type="evidence" value="ECO:0000266"/>
    <property type="project" value="RGD"/>
</dbReference>
<dbReference type="GO" id="GO:0007608">
    <property type="term" value="P:sensory perception of smell"/>
    <property type="evidence" value="ECO:0000250"/>
    <property type="project" value="UniProtKB"/>
</dbReference>
<dbReference type="GO" id="GO:0016192">
    <property type="term" value="P:vesicle-mediated transport"/>
    <property type="evidence" value="ECO:0000318"/>
    <property type="project" value="GO_Central"/>
</dbReference>
<dbReference type="CDD" id="cd08385">
    <property type="entry name" value="C2A_Synaptotagmin-1-5-6-9-10"/>
    <property type="match status" value="1"/>
</dbReference>
<dbReference type="CDD" id="cd08403">
    <property type="entry name" value="C2B_Synaptotagmin-3-5-6-9-10"/>
    <property type="match status" value="1"/>
</dbReference>
<dbReference type="FunFam" id="2.60.40.150:FF:000005">
    <property type="entry name" value="Synaptotagmin 6"/>
    <property type="match status" value="1"/>
</dbReference>
<dbReference type="FunFam" id="2.60.40.150:FF:000011">
    <property type="entry name" value="Synaptotagmin 6"/>
    <property type="match status" value="1"/>
</dbReference>
<dbReference type="Gene3D" id="2.60.40.150">
    <property type="entry name" value="C2 domain"/>
    <property type="match status" value="2"/>
</dbReference>
<dbReference type="InterPro" id="IPR000008">
    <property type="entry name" value="C2_dom"/>
</dbReference>
<dbReference type="InterPro" id="IPR035892">
    <property type="entry name" value="C2_domain_sf"/>
</dbReference>
<dbReference type="InterPro" id="IPR001565">
    <property type="entry name" value="Synaptotagmin"/>
</dbReference>
<dbReference type="PANTHER" id="PTHR10024">
    <property type="entry name" value="SYNAPTOTAGMIN"/>
    <property type="match status" value="1"/>
</dbReference>
<dbReference type="PANTHER" id="PTHR10024:SF46">
    <property type="entry name" value="SYNAPTOTAGMIN-10"/>
    <property type="match status" value="1"/>
</dbReference>
<dbReference type="Pfam" id="PF00168">
    <property type="entry name" value="C2"/>
    <property type="match status" value="2"/>
</dbReference>
<dbReference type="PRINTS" id="PR00360">
    <property type="entry name" value="C2DOMAIN"/>
</dbReference>
<dbReference type="PRINTS" id="PR00399">
    <property type="entry name" value="SYNAPTOTAGMN"/>
</dbReference>
<dbReference type="SMART" id="SM00239">
    <property type="entry name" value="C2"/>
    <property type="match status" value="2"/>
</dbReference>
<dbReference type="SUPFAM" id="SSF49562">
    <property type="entry name" value="C2 domain (Calcium/lipid-binding domain, CaLB)"/>
    <property type="match status" value="2"/>
</dbReference>
<dbReference type="PROSITE" id="PS50004">
    <property type="entry name" value="C2"/>
    <property type="match status" value="2"/>
</dbReference>